<reference key="1">
    <citation type="journal article" date="1997" name="Eur. J. Biochem.">
        <title>Cloning, expression, purification and characterization of triosephosphate isomerase from Trypanosoma cruzi.</title>
        <authorList>
            <person name="Ostoa-Saloma P."/>
            <person name="Garza-Ramos G."/>
            <person name="Ramirez J."/>
            <person name="Becker I."/>
            <person name="Berzunza M."/>
            <person name="Landa A."/>
            <person name="Gomez-Puyou A."/>
            <person name="Tuena de Gomez-Puyou M."/>
            <person name="Perez-Montfort R."/>
        </authorList>
    </citation>
    <scope>NUCLEOTIDE SEQUENCE [GENOMIC DNA]</scope>
    <source>
        <strain>Ninoa</strain>
    </source>
</reference>
<reference key="2">
    <citation type="journal article" date="1998" name="J. Mol. Biol.">
        <title>Differences in the intersubunit contacts in triosephosphate isomerase from two closely related pathogenic trypanosomes.</title>
        <authorList>
            <person name="Maldonado E."/>
            <person name="Soriano-Garcia M."/>
            <person name="Moreno A."/>
            <person name="Cabrera N."/>
            <person name="Garza-Ramos G."/>
            <person name="Tuena de Gomez-Puyou M."/>
            <person name="Gomez-Puyou A."/>
            <person name="Perez-Montfort R."/>
        </authorList>
    </citation>
    <scope>X-RAY CRYSTALLOGRAPHY (1.83 ANGSTROMS)</scope>
    <scope>HOMODIMERIZATION</scope>
    <source>
        <strain>Ninoa</strain>
    </source>
</reference>
<reference key="3">
    <citation type="journal article" date="1999" name="Proc. Natl. Acad. Sci. U.S.A.">
        <title>Crystal structure of triosephosphate isomerase from Trypanosoma cruzi in hexane.</title>
        <authorList>
            <person name="Gao X.-G."/>
            <person name="Maldonado E."/>
            <person name="Perez-Montfort R."/>
            <person name="Garza-Ramos G."/>
            <person name="Tuena de Gomez-Puyou M."/>
            <person name="Gomez-Puyou A."/>
            <person name="Rodriguez-Romero A."/>
        </authorList>
    </citation>
    <scope>X-RAY CRYSTALLOGRAPHY (2.0 ANGSTROMS)</scope>
    <scope>HOMODIMERIZATION</scope>
    <source>
        <strain>Ninoa</strain>
    </source>
</reference>
<feature type="chain" id="PRO_0000090143" description="Triosephosphate isomerase, glycosomal">
    <location>
        <begin position="1"/>
        <end position="251"/>
    </location>
</feature>
<feature type="active site" description="Electrophile" evidence="1">
    <location>
        <position position="96"/>
    </location>
</feature>
<feature type="active site" description="Proton acceptor" evidence="1">
    <location>
        <position position="168"/>
    </location>
</feature>
<feature type="binding site" evidence="1">
    <location>
        <position position="12"/>
    </location>
    <ligand>
        <name>substrate</name>
    </ligand>
</feature>
<feature type="binding site" evidence="1">
    <location>
        <position position="14"/>
    </location>
    <ligand>
        <name>substrate</name>
    </ligand>
</feature>
<feature type="strand" evidence="3">
    <location>
        <begin position="8"/>
        <end position="12"/>
    </location>
</feature>
<feature type="helix" evidence="3">
    <location>
        <begin position="19"/>
        <end position="31"/>
    </location>
</feature>
<feature type="strand" evidence="3">
    <location>
        <begin position="39"/>
        <end position="43"/>
    </location>
</feature>
<feature type="helix" evidence="3">
    <location>
        <begin position="46"/>
        <end position="48"/>
    </location>
</feature>
<feature type="helix" evidence="3">
    <location>
        <begin position="49"/>
        <end position="55"/>
    </location>
</feature>
<feature type="strand" evidence="3">
    <location>
        <begin position="61"/>
        <end position="66"/>
    </location>
</feature>
<feature type="strand" evidence="3">
    <location>
        <begin position="69"/>
        <end position="71"/>
    </location>
</feature>
<feature type="helix" evidence="3">
    <location>
        <begin position="81"/>
        <end position="87"/>
    </location>
</feature>
<feature type="strand" evidence="3">
    <location>
        <begin position="91"/>
        <end position="95"/>
    </location>
</feature>
<feature type="helix" evidence="3">
    <location>
        <begin position="97"/>
        <end position="102"/>
    </location>
</feature>
<feature type="helix" evidence="3">
    <location>
        <begin position="107"/>
        <end position="119"/>
    </location>
</feature>
<feature type="strand" evidence="3">
    <location>
        <begin position="123"/>
        <end position="128"/>
    </location>
</feature>
<feature type="helix" evidence="3">
    <location>
        <begin position="132"/>
        <end position="136"/>
    </location>
</feature>
<feature type="helix" evidence="3">
    <location>
        <begin position="140"/>
        <end position="152"/>
    </location>
</feature>
<feature type="helix" evidence="3">
    <location>
        <begin position="157"/>
        <end position="162"/>
    </location>
</feature>
<feature type="strand" evidence="3">
    <location>
        <begin position="163"/>
        <end position="167"/>
    </location>
</feature>
<feature type="helix" evidence="3">
    <location>
        <begin position="170"/>
        <end position="172"/>
    </location>
</feature>
<feature type="strand" evidence="3">
    <location>
        <begin position="173"/>
        <end position="176"/>
    </location>
</feature>
<feature type="helix" evidence="3">
    <location>
        <begin position="181"/>
        <end position="199"/>
    </location>
</feature>
<feature type="helix" evidence="3">
    <location>
        <begin position="201"/>
        <end position="206"/>
    </location>
</feature>
<feature type="strand" evidence="3">
    <location>
        <begin position="208"/>
        <end position="211"/>
    </location>
</feature>
<feature type="turn" evidence="3">
    <location>
        <begin position="217"/>
        <end position="219"/>
    </location>
</feature>
<feature type="helix" evidence="3">
    <location>
        <begin position="220"/>
        <end position="224"/>
    </location>
</feature>
<feature type="strand" evidence="3">
    <location>
        <begin position="231"/>
        <end position="234"/>
    </location>
</feature>
<feature type="helix" evidence="3">
    <location>
        <begin position="236"/>
        <end position="239"/>
    </location>
</feature>
<feature type="helix" evidence="3">
    <location>
        <begin position="243"/>
        <end position="248"/>
    </location>
</feature>
<comment type="catalytic activity">
    <reaction>
        <text>D-glyceraldehyde 3-phosphate = dihydroxyacetone phosphate</text>
        <dbReference type="Rhea" id="RHEA:18585"/>
        <dbReference type="ChEBI" id="CHEBI:57642"/>
        <dbReference type="ChEBI" id="CHEBI:59776"/>
        <dbReference type="EC" id="5.3.1.1"/>
    </reaction>
</comment>
<comment type="pathway">
    <text>Carbohydrate biosynthesis; gluconeogenesis.</text>
</comment>
<comment type="pathway">
    <text>Carbohydrate degradation; glycolysis; D-glyceraldehyde 3-phosphate from glycerone phosphate: step 1/1.</text>
</comment>
<comment type="subunit">
    <text>Homodimer.</text>
</comment>
<comment type="subcellular location">
    <subcellularLocation>
        <location>Glycosome</location>
    </subcellularLocation>
</comment>
<comment type="similarity">
    <text evidence="2">Belongs to the triosephosphate isomerase family.</text>
</comment>
<keyword id="KW-0002">3D-structure</keyword>
<keyword id="KW-0312">Gluconeogenesis</keyword>
<keyword id="KW-0324">Glycolysis</keyword>
<keyword id="KW-0327">Glycosome</keyword>
<keyword id="KW-0413">Isomerase</keyword>
<keyword id="KW-0576">Peroxisome</keyword>
<protein>
    <recommendedName>
        <fullName>Triosephosphate isomerase, glycosomal</fullName>
        <shortName>TIM</shortName>
        <shortName>Triose-phosphate isomerase</shortName>
        <ecNumber>5.3.1.1</ecNumber>
    </recommendedName>
</protein>
<dbReference type="EC" id="5.3.1.1"/>
<dbReference type="EMBL" id="U53867">
    <property type="protein sequence ID" value="AAB58349.1"/>
    <property type="molecule type" value="Genomic_DNA"/>
</dbReference>
<dbReference type="PDB" id="1CI1">
    <property type="method" value="X-ray"/>
    <property type="resolution" value="2.00 A"/>
    <property type="chains" value="A/B=1-251"/>
</dbReference>
<dbReference type="PDB" id="1SUX">
    <property type="method" value="X-ray"/>
    <property type="resolution" value="2.00 A"/>
    <property type="chains" value="A/B=1-251"/>
</dbReference>
<dbReference type="PDB" id="1TCD">
    <property type="method" value="X-ray"/>
    <property type="resolution" value="1.83 A"/>
    <property type="chains" value="A/B=3-251"/>
</dbReference>
<dbReference type="PDB" id="2OMA">
    <property type="method" value="X-ray"/>
    <property type="resolution" value="2.15 A"/>
    <property type="chains" value="A/B=2-251"/>
</dbReference>
<dbReference type="PDB" id="2V5B">
    <property type="method" value="X-ray"/>
    <property type="resolution" value="2.00 A"/>
    <property type="chains" value="A=1-251"/>
</dbReference>
<dbReference type="PDB" id="3Q37">
    <property type="method" value="X-ray"/>
    <property type="resolution" value="1.65 A"/>
    <property type="chains" value="A/B/C/D=37-92, A/B/C/D=121-251"/>
</dbReference>
<dbReference type="PDB" id="4HHP">
    <property type="method" value="X-ray"/>
    <property type="resolution" value="1.50 A"/>
    <property type="chains" value="A/B=1-251"/>
</dbReference>
<dbReference type="PDBsum" id="1CI1"/>
<dbReference type="PDBsum" id="1SUX"/>
<dbReference type="PDBsum" id="1TCD"/>
<dbReference type="PDBsum" id="2OMA"/>
<dbReference type="PDBsum" id="2V5B"/>
<dbReference type="PDBsum" id="3Q37"/>
<dbReference type="PDBsum" id="4HHP"/>
<dbReference type="SMR" id="P52270"/>
<dbReference type="BindingDB" id="P52270"/>
<dbReference type="ChEMBL" id="CHEMBL5834"/>
<dbReference type="DrugBank" id="DB03132">
    <property type="generic name" value="3-(2-Benzothiazolylthio)-1-Propanesulfonic Acid"/>
</dbReference>
<dbReference type="VEuPathDB" id="TriTrypDB:BCY84_02271"/>
<dbReference type="VEuPathDB" id="TriTrypDB:C3747_69g188"/>
<dbReference type="VEuPathDB" id="TriTrypDB:C4B63_28g114"/>
<dbReference type="VEuPathDB" id="TriTrypDB:ECC02_003479"/>
<dbReference type="VEuPathDB" id="TriTrypDB:TcBrA4_0009200"/>
<dbReference type="VEuPathDB" id="TriTrypDB:TcCL_ESM12473"/>
<dbReference type="VEuPathDB" id="TriTrypDB:TcCLB.508647.200"/>
<dbReference type="VEuPathDB" id="TriTrypDB:TCDM_00802"/>
<dbReference type="VEuPathDB" id="TriTrypDB:TcG_00710"/>
<dbReference type="VEuPathDB" id="TriTrypDB:TCSYLVIO_001494"/>
<dbReference type="VEuPathDB" id="TriTrypDB:TcYC6_0081760"/>
<dbReference type="BRENDA" id="5.3.1.1">
    <property type="organism ID" value="6524"/>
</dbReference>
<dbReference type="SABIO-RK" id="P52270"/>
<dbReference type="UniPathway" id="UPA00109">
    <property type="reaction ID" value="UER00189"/>
</dbReference>
<dbReference type="UniPathway" id="UPA00138"/>
<dbReference type="EvolutionaryTrace" id="P52270"/>
<dbReference type="GO" id="GO:0005829">
    <property type="term" value="C:cytosol"/>
    <property type="evidence" value="ECO:0007669"/>
    <property type="project" value="TreeGrafter"/>
</dbReference>
<dbReference type="GO" id="GO:0020015">
    <property type="term" value="C:glycosome"/>
    <property type="evidence" value="ECO:0007669"/>
    <property type="project" value="UniProtKB-SubCell"/>
</dbReference>
<dbReference type="GO" id="GO:0004807">
    <property type="term" value="F:triose-phosphate isomerase activity"/>
    <property type="evidence" value="ECO:0007669"/>
    <property type="project" value="UniProtKB-EC"/>
</dbReference>
<dbReference type="GO" id="GO:0006094">
    <property type="term" value="P:gluconeogenesis"/>
    <property type="evidence" value="ECO:0007669"/>
    <property type="project" value="UniProtKB-UniPathway"/>
</dbReference>
<dbReference type="GO" id="GO:0046166">
    <property type="term" value="P:glyceraldehyde-3-phosphate biosynthetic process"/>
    <property type="evidence" value="ECO:0007669"/>
    <property type="project" value="TreeGrafter"/>
</dbReference>
<dbReference type="GO" id="GO:0019563">
    <property type="term" value="P:glycerol catabolic process"/>
    <property type="evidence" value="ECO:0007669"/>
    <property type="project" value="TreeGrafter"/>
</dbReference>
<dbReference type="GO" id="GO:0006096">
    <property type="term" value="P:glycolytic process"/>
    <property type="evidence" value="ECO:0007669"/>
    <property type="project" value="UniProtKB-UniPathway"/>
</dbReference>
<dbReference type="CDD" id="cd00311">
    <property type="entry name" value="TIM"/>
    <property type="match status" value="1"/>
</dbReference>
<dbReference type="FunFam" id="3.20.20.70:FF:000020">
    <property type="entry name" value="Triosephosphate isomerase"/>
    <property type="match status" value="1"/>
</dbReference>
<dbReference type="Gene3D" id="3.20.20.70">
    <property type="entry name" value="Aldolase class I"/>
    <property type="match status" value="1"/>
</dbReference>
<dbReference type="HAMAP" id="MF_00147_B">
    <property type="entry name" value="TIM_B"/>
    <property type="match status" value="1"/>
</dbReference>
<dbReference type="InterPro" id="IPR013785">
    <property type="entry name" value="Aldolase_TIM"/>
</dbReference>
<dbReference type="InterPro" id="IPR035990">
    <property type="entry name" value="TIM_sf"/>
</dbReference>
<dbReference type="InterPro" id="IPR022896">
    <property type="entry name" value="TrioseP_Isoase_bac/euk"/>
</dbReference>
<dbReference type="InterPro" id="IPR000652">
    <property type="entry name" value="Triosephosphate_isomerase"/>
</dbReference>
<dbReference type="InterPro" id="IPR020861">
    <property type="entry name" value="Triosephosphate_isomerase_AS"/>
</dbReference>
<dbReference type="NCBIfam" id="TIGR00419">
    <property type="entry name" value="tim"/>
    <property type="match status" value="1"/>
</dbReference>
<dbReference type="PANTHER" id="PTHR21139">
    <property type="entry name" value="TRIOSEPHOSPHATE ISOMERASE"/>
    <property type="match status" value="1"/>
</dbReference>
<dbReference type="PANTHER" id="PTHR21139:SF2">
    <property type="entry name" value="TRIOSEPHOSPHATE ISOMERASE"/>
    <property type="match status" value="1"/>
</dbReference>
<dbReference type="Pfam" id="PF00121">
    <property type="entry name" value="TIM"/>
    <property type="match status" value="1"/>
</dbReference>
<dbReference type="SUPFAM" id="SSF51351">
    <property type="entry name" value="Triosephosphate isomerase (TIM)"/>
    <property type="match status" value="1"/>
</dbReference>
<dbReference type="PROSITE" id="PS00171">
    <property type="entry name" value="TIM_1"/>
    <property type="match status" value="1"/>
</dbReference>
<dbReference type="PROSITE" id="PS51440">
    <property type="entry name" value="TIM_2"/>
    <property type="match status" value="1"/>
</dbReference>
<proteinExistence type="evidence at protein level"/>
<name>TPIS_TRYCR</name>
<sequence>MASKPQPIAAANWKCNGSESLLVPLIETLNAATFDHDVQCVVAPTFLHIPMTKARLTNPKFQIAAQNAITRSGAFTGEVSLQILKDYGISWVVLGHSERRLYYGETNEIVAEKVAQACAAGFHVIVCVGETNEEREAGRTAAVVLTQLAAVAQKLSKEAWSRVVIAYEPVWAIGTGKVATPQQAQEVHELLRRWVRSKLGTDIAAQLRILYGGSVTAKNARTLYQMRDINGFLVGGASLKPEFVEIIEATK</sequence>
<evidence type="ECO:0000250" key="1"/>
<evidence type="ECO:0000305" key="2"/>
<evidence type="ECO:0007829" key="3">
    <source>
        <dbReference type="PDB" id="4HHP"/>
    </source>
</evidence>
<accession>P52270</accession>
<organism>
    <name type="scientific">Trypanosoma cruzi</name>
    <dbReference type="NCBI Taxonomy" id="5693"/>
    <lineage>
        <taxon>Eukaryota</taxon>
        <taxon>Discoba</taxon>
        <taxon>Euglenozoa</taxon>
        <taxon>Kinetoplastea</taxon>
        <taxon>Metakinetoplastina</taxon>
        <taxon>Trypanosomatida</taxon>
        <taxon>Trypanosomatidae</taxon>
        <taxon>Trypanosoma</taxon>
        <taxon>Schizotrypanum</taxon>
    </lineage>
</organism>